<sequence length="493" mass="54701">MAAVTGPSFWLGNETLKVPVALFALNRQRLCERLRKNPAVQAGSIVVLQGGEETLRYCTDTEVLFRQESFFHWAFGVTEPGCYGVIDVDTGKSTLFVPRLPASYATWMGKIHSKEHFKEKYAMDDVQYTDEIDSVLTSQKPSVLLTLRGVNTDSGSVCREASFDGISKFEVNNTILHPEIVECRVFKTDMELEVLRYTNKISSEAHREVMKAVKVGMKEYELESLFEHYCYSRGGMRHSSYTCICGSGENSAVLHYGHAGAPNDRTIQNGDMCLFDMGGEYYCFASDITCSFPANGKFTADQKAVYEAVLRSSRAVMGAMKPGVWWPDMRRLADRIHLEELAHTGILSGSVDAMVQAHLGAVSMPHGLGHFLGIDVHDVGGYPEGVERIDEPGLRSLRTARHLQPGMVLTVEPGIYFIDHLLDEALADPAHACFFNREVLQRFRGFGGVRIEEDVVVTDSGMELLTCVPRTVEEIEACMAGCDKAFTPFSGPK</sequence>
<feature type="initiator methionine" description="Removed" evidence="2">
    <location>
        <position position="1"/>
    </location>
</feature>
<feature type="chain" id="PRO_0000328064" description="Xaa-Pro dipeptidase">
    <location>
        <begin position="2"/>
        <end position="493"/>
    </location>
</feature>
<feature type="binding site" evidence="1">
    <location>
        <position position="255"/>
    </location>
    <ligand>
        <name>a dipeptide</name>
        <dbReference type="ChEBI" id="CHEBI:90799"/>
    </ligand>
</feature>
<feature type="binding site" evidence="1">
    <location>
        <position position="276"/>
    </location>
    <ligand>
        <name>Mn(2+)</name>
        <dbReference type="ChEBI" id="CHEBI:29035"/>
        <label>1</label>
    </ligand>
</feature>
<feature type="binding site" evidence="1">
    <location>
        <position position="287"/>
    </location>
    <ligand>
        <name>a dipeptide</name>
        <dbReference type="ChEBI" id="CHEBI:90799"/>
    </ligand>
</feature>
<feature type="binding site" evidence="1">
    <location>
        <position position="287"/>
    </location>
    <ligand>
        <name>Mn(2+)</name>
        <dbReference type="ChEBI" id="CHEBI:29035"/>
        <label>1</label>
    </ligand>
</feature>
<feature type="binding site" evidence="1">
    <location>
        <position position="287"/>
    </location>
    <ligand>
        <name>Mn(2+)</name>
        <dbReference type="ChEBI" id="CHEBI:29035"/>
        <label>2</label>
    </ligand>
</feature>
<feature type="binding site" evidence="1">
    <location>
        <position position="370"/>
    </location>
    <ligand>
        <name>Mn(2+)</name>
        <dbReference type="ChEBI" id="CHEBI:29035"/>
        <label>2</label>
    </ligand>
</feature>
<feature type="binding site" evidence="1">
    <location>
        <position position="377"/>
    </location>
    <ligand>
        <name>a dipeptide</name>
        <dbReference type="ChEBI" id="CHEBI:90799"/>
    </ligand>
</feature>
<feature type="binding site" evidence="1">
    <location>
        <position position="398"/>
    </location>
    <ligand>
        <name>a dipeptide</name>
        <dbReference type="ChEBI" id="CHEBI:90799"/>
    </ligand>
</feature>
<feature type="binding site" evidence="1">
    <location>
        <position position="412"/>
    </location>
    <ligand>
        <name>Mn(2+)</name>
        <dbReference type="ChEBI" id="CHEBI:29035"/>
        <label>2</label>
    </ligand>
</feature>
<feature type="binding site" evidence="1">
    <location>
        <position position="452"/>
    </location>
    <ligand>
        <name>Mn(2+)</name>
        <dbReference type="ChEBI" id="CHEBI:29035"/>
        <label>1</label>
    </ligand>
</feature>
<feature type="binding site" evidence="1">
    <location>
        <position position="452"/>
    </location>
    <ligand>
        <name>Mn(2+)</name>
        <dbReference type="ChEBI" id="CHEBI:29035"/>
        <label>2</label>
    </ligand>
</feature>
<feature type="modified residue" description="N-acetylalanine" evidence="1 2">
    <location>
        <position position="2"/>
    </location>
</feature>
<feature type="modified residue" description="Phosphoserine" evidence="1">
    <location>
        <position position="167"/>
    </location>
</feature>
<comment type="function">
    <text evidence="1">Dipeptidase that catalyzes the hydrolysis of dipeptides with a prolyl (Xaa-Pro) or hydroxyprolyl residue in the C-terminal position. The preferred dipeptide substrate is Gly-Pro, but other Xaa-Pro dipeptides, such as Ala-Pro, Met-Pro, Phe-Pro, Val-Pro and Leu-Pro, can be cleaved. Plays an important role in collagen metabolism because the high level of iminoacids in collagen.</text>
</comment>
<comment type="catalytic activity">
    <reaction evidence="1">
        <text>Xaa-L-Pro dipeptide + H2O = an L-alpha-amino acid + L-proline</text>
        <dbReference type="Rhea" id="RHEA:76407"/>
        <dbReference type="ChEBI" id="CHEBI:15377"/>
        <dbReference type="ChEBI" id="CHEBI:59869"/>
        <dbReference type="ChEBI" id="CHEBI:60039"/>
        <dbReference type="ChEBI" id="CHEBI:195196"/>
        <dbReference type="EC" id="3.4.13.9"/>
    </reaction>
</comment>
<comment type="cofactor">
    <cofactor evidence="1">
        <name>Mn(2+)</name>
        <dbReference type="ChEBI" id="CHEBI:29035"/>
    </cofactor>
    <text evidence="1">Binds 2 manganese ions per subunit.</text>
</comment>
<comment type="subunit">
    <text evidence="1">Homodimer.</text>
</comment>
<comment type="similarity">
    <text evidence="3">Belongs to the peptidase M24B family. Eukaryotic-type prolidase subfamily.</text>
</comment>
<name>PEPD_PONAB</name>
<reference key="1">
    <citation type="submission" date="2004-11" db="EMBL/GenBank/DDBJ databases">
        <authorList>
            <consortium name="The German cDNA consortium"/>
        </authorList>
    </citation>
    <scope>NUCLEOTIDE SEQUENCE [LARGE SCALE MRNA]</scope>
    <source>
        <tissue>Kidney</tissue>
    </source>
</reference>
<gene>
    <name type="primary">PEPD</name>
</gene>
<organism>
    <name type="scientific">Pongo abelii</name>
    <name type="common">Sumatran orangutan</name>
    <name type="synonym">Pongo pygmaeus abelii</name>
    <dbReference type="NCBI Taxonomy" id="9601"/>
    <lineage>
        <taxon>Eukaryota</taxon>
        <taxon>Metazoa</taxon>
        <taxon>Chordata</taxon>
        <taxon>Craniata</taxon>
        <taxon>Vertebrata</taxon>
        <taxon>Euteleostomi</taxon>
        <taxon>Mammalia</taxon>
        <taxon>Eutheria</taxon>
        <taxon>Euarchontoglires</taxon>
        <taxon>Primates</taxon>
        <taxon>Haplorrhini</taxon>
        <taxon>Catarrhini</taxon>
        <taxon>Hominidae</taxon>
        <taxon>Pongo</taxon>
    </lineage>
</organism>
<accession>Q5RFB3</accession>
<protein>
    <recommendedName>
        <fullName>Xaa-Pro dipeptidase</fullName>
        <shortName>X-Pro dipeptidase</shortName>
        <ecNumber evidence="1">3.4.13.9</ecNumber>
    </recommendedName>
    <alternativeName>
        <fullName>Imidodipeptidase</fullName>
    </alternativeName>
    <alternativeName>
        <fullName>Peptidase D</fullName>
    </alternativeName>
    <alternativeName>
        <fullName>Proline dipeptidase</fullName>
        <shortName>Prolidase</shortName>
    </alternativeName>
</protein>
<proteinExistence type="evidence at transcript level"/>
<keyword id="KW-0007">Acetylation</keyword>
<keyword id="KW-0177">Collagen degradation</keyword>
<keyword id="KW-0224">Dipeptidase</keyword>
<keyword id="KW-0378">Hydrolase</keyword>
<keyword id="KW-0464">Manganese</keyword>
<keyword id="KW-0479">Metal-binding</keyword>
<keyword id="KW-0482">Metalloprotease</keyword>
<keyword id="KW-0597">Phosphoprotein</keyword>
<keyword id="KW-0645">Protease</keyword>
<keyword id="KW-1185">Reference proteome</keyword>
<dbReference type="EC" id="3.4.13.9" evidence="1"/>
<dbReference type="EMBL" id="CR857247">
    <property type="protein sequence ID" value="CAH89544.1"/>
    <property type="molecule type" value="mRNA"/>
</dbReference>
<dbReference type="RefSeq" id="NP_001127165.1">
    <property type="nucleotide sequence ID" value="NM_001133693.2"/>
</dbReference>
<dbReference type="SMR" id="Q5RFB3"/>
<dbReference type="FunCoup" id="Q5RFB3">
    <property type="interactions" value="284"/>
</dbReference>
<dbReference type="STRING" id="9601.ENSPPYP00000011006"/>
<dbReference type="MEROPS" id="M24.007"/>
<dbReference type="GeneID" id="100174216"/>
<dbReference type="KEGG" id="pon:100174216"/>
<dbReference type="CTD" id="5184"/>
<dbReference type="eggNOG" id="KOG2737">
    <property type="taxonomic scope" value="Eukaryota"/>
</dbReference>
<dbReference type="InParanoid" id="Q5RFB3"/>
<dbReference type="OrthoDB" id="10261878at2759"/>
<dbReference type="Proteomes" id="UP000001595">
    <property type="component" value="Unplaced"/>
</dbReference>
<dbReference type="GO" id="GO:0030145">
    <property type="term" value="F:manganese ion binding"/>
    <property type="evidence" value="ECO:0007669"/>
    <property type="project" value="InterPro"/>
</dbReference>
<dbReference type="GO" id="GO:0070006">
    <property type="term" value="F:metalloaminopeptidase activity"/>
    <property type="evidence" value="ECO:0007669"/>
    <property type="project" value="InterPro"/>
</dbReference>
<dbReference type="GO" id="GO:0102009">
    <property type="term" value="F:proline dipeptidase activity"/>
    <property type="evidence" value="ECO:0000250"/>
    <property type="project" value="UniProtKB"/>
</dbReference>
<dbReference type="GO" id="GO:0030574">
    <property type="term" value="P:collagen catabolic process"/>
    <property type="evidence" value="ECO:0007669"/>
    <property type="project" value="UniProtKB-KW"/>
</dbReference>
<dbReference type="GO" id="GO:0043069">
    <property type="term" value="P:negative regulation of programmed cell death"/>
    <property type="evidence" value="ECO:0000250"/>
    <property type="project" value="UniProtKB"/>
</dbReference>
<dbReference type="GO" id="GO:0006508">
    <property type="term" value="P:proteolysis"/>
    <property type="evidence" value="ECO:0000250"/>
    <property type="project" value="UniProtKB"/>
</dbReference>
<dbReference type="CDD" id="cd01087">
    <property type="entry name" value="Prolidase"/>
    <property type="match status" value="1"/>
</dbReference>
<dbReference type="FunFam" id="3.90.230.10:FF:000002">
    <property type="entry name" value="Xaa-Pro aminopeptidase 3"/>
    <property type="match status" value="1"/>
</dbReference>
<dbReference type="FunFam" id="3.40.350.10:FF:000007">
    <property type="entry name" value="Xaa-Pro dipeptidase"/>
    <property type="match status" value="1"/>
</dbReference>
<dbReference type="Gene3D" id="3.90.230.10">
    <property type="entry name" value="Creatinase/methionine aminopeptidase superfamily"/>
    <property type="match status" value="1"/>
</dbReference>
<dbReference type="Gene3D" id="3.40.350.10">
    <property type="entry name" value="Creatinase/prolidase N-terminal domain"/>
    <property type="match status" value="1"/>
</dbReference>
<dbReference type="InterPro" id="IPR007865">
    <property type="entry name" value="Aminopep_P_N"/>
</dbReference>
<dbReference type="InterPro" id="IPR029149">
    <property type="entry name" value="Creatin/AminoP/Spt16_N"/>
</dbReference>
<dbReference type="InterPro" id="IPR036005">
    <property type="entry name" value="Creatinase/aminopeptidase-like"/>
</dbReference>
<dbReference type="InterPro" id="IPR000994">
    <property type="entry name" value="Pept_M24"/>
</dbReference>
<dbReference type="InterPro" id="IPR001131">
    <property type="entry name" value="Peptidase_M24B_aminopep-P_CS"/>
</dbReference>
<dbReference type="InterPro" id="IPR052433">
    <property type="entry name" value="X-Pro_dipept-like"/>
</dbReference>
<dbReference type="PANTHER" id="PTHR48480">
    <property type="match status" value="1"/>
</dbReference>
<dbReference type="PANTHER" id="PTHR48480:SF2">
    <property type="entry name" value="PEPTIDASE D"/>
    <property type="match status" value="1"/>
</dbReference>
<dbReference type="Pfam" id="PF05195">
    <property type="entry name" value="AMP_N"/>
    <property type="match status" value="1"/>
</dbReference>
<dbReference type="Pfam" id="PF00557">
    <property type="entry name" value="Peptidase_M24"/>
    <property type="match status" value="1"/>
</dbReference>
<dbReference type="SMART" id="SM01011">
    <property type="entry name" value="AMP_N"/>
    <property type="match status" value="1"/>
</dbReference>
<dbReference type="SUPFAM" id="SSF55920">
    <property type="entry name" value="Creatinase/aminopeptidase"/>
    <property type="match status" value="1"/>
</dbReference>
<dbReference type="SUPFAM" id="SSF53092">
    <property type="entry name" value="Creatinase/prolidase N-terminal domain"/>
    <property type="match status" value="1"/>
</dbReference>
<dbReference type="PROSITE" id="PS00491">
    <property type="entry name" value="PROLINE_PEPTIDASE"/>
    <property type="match status" value="1"/>
</dbReference>
<evidence type="ECO:0000250" key="1">
    <source>
        <dbReference type="UniProtKB" id="P12955"/>
    </source>
</evidence>
<evidence type="ECO:0000255" key="2"/>
<evidence type="ECO:0000305" key="3"/>